<reference evidence="6 7" key="1">
    <citation type="journal article" date="2015" name="Biochem. Biophys. Res. Commun.">
        <title>Structural basis for the ligand-binding specificity of fatty acid-binding proteins (pFABP4 and pFABP5) in gentoo penguin.</title>
        <authorList>
            <person name="Lee C.W."/>
            <person name="Kim J.E."/>
            <person name="Do H."/>
            <person name="Kim R.O."/>
            <person name="Lee S.G."/>
            <person name="Park H.H."/>
            <person name="Chang J.H."/>
            <person name="Yim J.H."/>
            <person name="Park H."/>
            <person name="Kim I.C."/>
            <person name="Lee J.H."/>
        </authorList>
    </citation>
    <scope>NUCLEOTIDE SEQUENCE [MRNA]</scope>
    <scope>X-RAY CRYSTALLOGRAPHY (2.1 ANGSTROMS) OF APOPROTEIN AND IN COMPLEX WITH LINOLEATE</scope>
    <scope>FUNCTION</scope>
    <scope>SUBSTRATE SPECIFICITY</scope>
    <scope>SUBUNIT</scope>
    <scope>DOMAIN</scope>
</reference>
<protein>
    <recommendedName>
        <fullName evidence="5">Fatty acid-binding protein, adipocyte</fullName>
    </recommendedName>
    <alternativeName>
        <fullName evidence="5">Adipocyte lipid-binding protein</fullName>
        <shortName evidence="5">ALBP</shortName>
    </alternativeName>
    <alternativeName>
        <fullName evidence="5">Adipocyte-type fatty acid-binding protein</fullName>
        <shortName evidence="5">AFABP</shortName>
    </alternativeName>
    <alternativeName>
        <fullName evidence="4">Fatty acid-binding protein 4</fullName>
    </alternativeName>
</protein>
<comment type="function">
    <text evidence="1 3">Lipid transport protein in adipocytes. Binds both long chain fatty acids and retinoic acid. Delivers long-chain fatty acids and retinoic acid to their cognate receptors in the nucleus (By similarity). Has the highest binding affinity for linoleic acid and decreasing relative affinity for eicosapentaenoic acid (EPA), alpha-linolenic acid (ALA), docosahexaenoic acid (DHA), oleic acid, palmitic acid and stearic acid, respectively (PubMed:26206084).</text>
</comment>
<comment type="subunit">
    <text evidence="3">Monomer.</text>
</comment>
<comment type="subcellular location">
    <subcellularLocation>
        <location evidence="1">Cytoplasm</location>
    </subcellularLocation>
    <subcellularLocation>
        <location evidence="1">Nucleus</location>
    </subcellularLocation>
    <text evidence="1">Depending on the nature of the ligand, a conformation change exposes a nuclear localization motif and the protein is transported into the nucleus. Subject to constitutive nuclear export.</text>
</comment>
<comment type="domain">
    <text evidence="3">Forms a beta-barrel structure that accommodates the hydrophobic ligand in its interior.</text>
</comment>
<comment type="similarity">
    <text evidence="2">Belongs to the calycin superfamily. Fatty-acid binding protein (FABP) family.</text>
</comment>
<accession>A0A0K0MJN3</accession>
<name>FABP4_PYGPA</name>
<gene>
    <name evidence="4" type="primary">FABP4</name>
</gene>
<feature type="chain" id="PRO_0000444560" description="Fatty acid-binding protein, adipocyte" evidence="1">
    <location>
        <begin position="1"/>
        <end position="132"/>
    </location>
</feature>
<feature type="short sequence motif" description="Nuclear localization signal" evidence="1">
    <location>
        <begin position="22"/>
        <end position="32"/>
    </location>
</feature>
<feature type="binding site" evidence="3 7">
    <location>
        <position position="107"/>
    </location>
    <ligand>
        <name>(9Z,12Z)-octadecadienoate</name>
        <dbReference type="ChEBI" id="CHEBI:30245"/>
    </ligand>
</feature>
<feature type="binding site" evidence="3 7">
    <location>
        <position position="127"/>
    </location>
    <ligand>
        <name>(9Z,12Z)-octadecadienoate</name>
        <dbReference type="ChEBI" id="CHEBI:30245"/>
    </ligand>
</feature>
<feature type="strand" evidence="8">
    <location>
        <begin position="7"/>
        <end position="16"/>
    </location>
</feature>
<feature type="helix" evidence="8">
    <location>
        <begin position="17"/>
        <end position="24"/>
    </location>
</feature>
<feature type="helix" evidence="8">
    <location>
        <begin position="30"/>
        <end position="36"/>
    </location>
</feature>
<feature type="strand" evidence="8">
    <location>
        <begin position="40"/>
        <end position="46"/>
    </location>
</feature>
<feature type="strand" evidence="8">
    <location>
        <begin position="49"/>
        <end position="59"/>
    </location>
</feature>
<feature type="strand" evidence="8">
    <location>
        <begin position="61"/>
        <end position="66"/>
    </location>
</feature>
<feature type="strand" evidence="8">
    <location>
        <begin position="71"/>
        <end position="74"/>
    </location>
</feature>
<feature type="strand" evidence="8">
    <location>
        <begin position="80"/>
        <end position="88"/>
    </location>
</feature>
<feature type="strand" evidence="8">
    <location>
        <begin position="91"/>
        <end position="98"/>
    </location>
</feature>
<feature type="strand" evidence="8">
    <location>
        <begin position="101"/>
        <end position="110"/>
    </location>
</feature>
<feature type="strand" evidence="8">
    <location>
        <begin position="113"/>
        <end position="120"/>
    </location>
</feature>
<feature type="strand" evidence="8">
    <location>
        <begin position="123"/>
        <end position="132"/>
    </location>
</feature>
<keyword id="KW-0002">3D-structure</keyword>
<keyword id="KW-0963">Cytoplasm</keyword>
<keyword id="KW-0446">Lipid-binding</keyword>
<keyword id="KW-0539">Nucleus</keyword>
<keyword id="KW-0813">Transport</keyword>
<sequence length="132" mass="14944">MCDQFVGTWKFLSSENFEDYMKELGVGFATRKMAGVAKPNVTISINGDVITIKTESTFKNTEVSFRLGEEFDETTADDRKTKNVITLDNGILNQVQKWDGKETVIKRKVMDGNLVVECTMNTVTSKRVYERA</sequence>
<organism>
    <name type="scientific">Pygoscelis papua</name>
    <name type="common">Gentoo penguin</name>
    <dbReference type="NCBI Taxonomy" id="30457"/>
    <lineage>
        <taxon>Eukaryota</taxon>
        <taxon>Metazoa</taxon>
        <taxon>Chordata</taxon>
        <taxon>Craniata</taxon>
        <taxon>Vertebrata</taxon>
        <taxon>Euteleostomi</taxon>
        <taxon>Archelosauria</taxon>
        <taxon>Archosauria</taxon>
        <taxon>Dinosauria</taxon>
        <taxon>Saurischia</taxon>
        <taxon>Theropoda</taxon>
        <taxon>Coelurosauria</taxon>
        <taxon>Aves</taxon>
        <taxon>Neognathae</taxon>
        <taxon>Neoaves</taxon>
        <taxon>Aequornithes</taxon>
        <taxon>Sphenisciformes</taxon>
        <taxon>Spheniscidae</taxon>
        <taxon>Pygoscelis</taxon>
    </lineage>
</organism>
<evidence type="ECO:0000250" key="1">
    <source>
        <dbReference type="UniProtKB" id="P04117"/>
    </source>
</evidence>
<evidence type="ECO:0000255" key="2">
    <source>
        <dbReference type="RuleBase" id="RU003696"/>
    </source>
</evidence>
<evidence type="ECO:0000269" key="3">
    <source>
    </source>
</evidence>
<evidence type="ECO:0000303" key="4">
    <source>
    </source>
</evidence>
<evidence type="ECO:0000305" key="5"/>
<evidence type="ECO:0007744" key="6">
    <source>
        <dbReference type="PDB" id="5BVQ"/>
    </source>
</evidence>
<evidence type="ECO:0007744" key="7">
    <source>
        <dbReference type="PDB" id="5BVS"/>
    </source>
</evidence>
<evidence type="ECO:0007829" key="8">
    <source>
        <dbReference type="PDB" id="5BVQ"/>
    </source>
</evidence>
<dbReference type="EMBL" id="KR054393">
    <property type="protein sequence ID" value="AKE37138.1"/>
    <property type="molecule type" value="mRNA"/>
</dbReference>
<dbReference type="PDB" id="5BVQ">
    <property type="method" value="X-ray"/>
    <property type="resolution" value="2.10 A"/>
    <property type="chains" value="A/B=1-132"/>
</dbReference>
<dbReference type="PDB" id="5BVS">
    <property type="method" value="X-ray"/>
    <property type="resolution" value="2.20 A"/>
    <property type="chains" value="A/B=1-132"/>
</dbReference>
<dbReference type="PDBsum" id="5BVQ"/>
<dbReference type="PDBsum" id="5BVS"/>
<dbReference type="SMR" id="A0A0K0MJN3"/>
<dbReference type="EvolutionaryTrace" id="A0A0K0MJN3"/>
<dbReference type="GO" id="GO:0005737">
    <property type="term" value="C:cytoplasm"/>
    <property type="evidence" value="ECO:0000250"/>
    <property type="project" value="UniProtKB"/>
</dbReference>
<dbReference type="GO" id="GO:0005634">
    <property type="term" value="C:nucleus"/>
    <property type="evidence" value="ECO:0000250"/>
    <property type="project" value="UniProtKB"/>
</dbReference>
<dbReference type="GO" id="GO:0070539">
    <property type="term" value="F:linoleic acid binding"/>
    <property type="evidence" value="ECO:0000314"/>
    <property type="project" value="UniProtKB"/>
</dbReference>
<dbReference type="GO" id="GO:0005324">
    <property type="term" value="F:long-chain fatty acid transmembrane transporter activity"/>
    <property type="evidence" value="ECO:0000250"/>
    <property type="project" value="UniProtKB"/>
</dbReference>
<dbReference type="GO" id="GO:0070538">
    <property type="term" value="F:oleic acid binding"/>
    <property type="evidence" value="ECO:0000314"/>
    <property type="project" value="UniProtKB"/>
</dbReference>
<dbReference type="GO" id="GO:0070540">
    <property type="term" value="F:stearic acid binding"/>
    <property type="evidence" value="ECO:0000314"/>
    <property type="project" value="UniProtKB"/>
</dbReference>
<dbReference type="GO" id="GO:0071399">
    <property type="term" value="P:cellular response to linoleic acid"/>
    <property type="evidence" value="ECO:0000314"/>
    <property type="project" value="UniProtKB"/>
</dbReference>
<dbReference type="GO" id="GO:0015909">
    <property type="term" value="P:long-chain fatty acid transport"/>
    <property type="evidence" value="ECO:0000250"/>
    <property type="project" value="UniProtKB"/>
</dbReference>
<dbReference type="FunFam" id="2.40.128.20:FF:000001">
    <property type="entry name" value="Fatty acid-binding protein, adipocyte"/>
    <property type="match status" value="1"/>
</dbReference>
<dbReference type="Gene3D" id="2.40.128.20">
    <property type="match status" value="1"/>
</dbReference>
<dbReference type="InterPro" id="IPR012674">
    <property type="entry name" value="Calycin"/>
</dbReference>
<dbReference type="InterPro" id="IPR000463">
    <property type="entry name" value="Fatty_acid-bd"/>
</dbReference>
<dbReference type="InterPro" id="IPR031259">
    <property type="entry name" value="ILBP"/>
</dbReference>
<dbReference type="InterPro" id="IPR000566">
    <property type="entry name" value="Lipocln_cytosolic_FA-bd_dom"/>
</dbReference>
<dbReference type="PANTHER" id="PTHR11955">
    <property type="entry name" value="FATTY ACID BINDING PROTEIN"/>
    <property type="match status" value="1"/>
</dbReference>
<dbReference type="Pfam" id="PF00061">
    <property type="entry name" value="Lipocalin"/>
    <property type="match status" value="1"/>
</dbReference>
<dbReference type="PRINTS" id="PR00178">
    <property type="entry name" value="FATTYACIDBP"/>
</dbReference>
<dbReference type="SUPFAM" id="SSF50814">
    <property type="entry name" value="Lipocalins"/>
    <property type="match status" value="1"/>
</dbReference>
<dbReference type="PROSITE" id="PS00214">
    <property type="entry name" value="FABP"/>
    <property type="match status" value="1"/>
</dbReference>
<proteinExistence type="evidence at protein level"/>